<name>SSRP_CHESB</name>
<comment type="function">
    <text evidence="1">Required for rescue of stalled ribosomes mediated by trans-translation. Binds to transfer-messenger RNA (tmRNA), required for stable association of tmRNA with ribosomes. tmRNA and SmpB together mimic tRNA shape, replacing the anticodon stem-loop with SmpB. tmRNA is encoded by the ssrA gene; the 2 termini fold to resemble tRNA(Ala) and it encodes a 'tag peptide', a short internal open reading frame. During trans-translation Ala-aminoacylated tmRNA acts like a tRNA, entering the A-site of stalled ribosomes, displacing the stalled mRNA. The ribosome then switches to translate the ORF on the tmRNA; the nascent peptide is terminated with the 'tag peptide' encoded by the tmRNA and targeted for degradation. The ribosome is freed to recommence translation, which seems to be the essential function of trans-translation.</text>
</comment>
<comment type="subcellular location">
    <subcellularLocation>
        <location evidence="1">Cytoplasm</location>
    </subcellularLocation>
    <text evidence="1">The tmRNA-SmpB complex associates with stalled 70S ribosomes.</text>
</comment>
<comment type="similarity">
    <text evidence="1">Belongs to the SmpB family.</text>
</comment>
<feature type="chain" id="PRO_0000331063" description="SsrA-binding protein">
    <location>
        <begin position="1"/>
        <end position="155"/>
    </location>
</feature>
<sequence length="155" mass="17860">MAKNTNITTVADNRKARFSYEVIDTLEAGLVLSGTEVKSLREGHANIQESYAAVEGGEIWLINSHIPEYFAGNRFNHEPRRRRKLLLSKKEMARLAQAVEREGMTMVPLKLYFNERGIAKLLLAIARGKKLHDKRETLKQRDWSREQARLLKERG</sequence>
<protein>
    <recommendedName>
        <fullName evidence="1">SsrA-binding protein</fullName>
    </recommendedName>
    <alternativeName>
        <fullName evidence="1">Small protein B</fullName>
    </alternativeName>
</protein>
<keyword id="KW-0963">Cytoplasm</keyword>
<keyword id="KW-0694">RNA-binding</keyword>
<gene>
    <name evidence="1" type="primary">smpB</name>
    <name type="ordered locus">Meso_0942</name>
</gene>
<evidence type="ECO:0000255" key="1">
    <source>
        <dbReference type="HAMAP-Rule" id="MF_00023"/>
    </source>
</evidence>
<proteinExistence type="inferred from homology"/>
<dbReference type="EMBL" id="CP000390">
    <property type="protein sequence ID" value="ABG62339.1"/>
    <property type="molecule type" value="Genomic_DNA"/>
</dbReference>
<dbReference type="SMR" id="Q11JT6"/>
<dbReference type="STRING" id="266779.Meso_0942"/>
<dbReference type="KEGG" id="mes:Meso_0942"/>
<dbReference type="eggNOG" id="COG0691">
    <property type="taxonomic scope" value="Bacteria"/>
</dbReference>
<dbReference type="HOGENOM" id="CLU_108953_0_1_5"/>
<dbReference type="OrthoDB" id="9805462at2"/>
<dbReference type="GO" id="GO:0005829">
    <property type="term" value="C:cytosol"/>
    <property type="evidence" value="ECO:0007669"/>
    <property type="project" value="TreeGrafter"/>
</dbReference>
<dbReference type="GO" id="GO:0003723">
    <property type="term" value="F:RNA binding"/>
    <property type="evidence" value="ECO:0007669"/>
    <property type="project" value="UniProtKB-UniRule"/>
</dbReference>
<dbReference type="GO" id="GO:0070929">
    <property type="term" value="P:trans-translation"/>
    <property type="evidence" value="ECO:0007669"/>
    <property type="project" value="UniProtKB-UniRule"/>
</dbReference>
<dbReference type="CDD" id="cd09294">
    <property type="entry name" value="SmpB"/>
    <property type="match status" value="1"/>
</dbReference>
<dbReference type="Gene3D" id="2.40.280.10">
    <property type="match status" value="1"/>
</dbReference>
<dbReference type="HAMAP" id="MF_00023">
    <property type="entry name" value="SmpB"/>
    <property type="match status" value="1"/>
</dbReference>
<dbReference type="InterPro" id="IPR023620">
    <property type="entry name" value="SmpB"/>
</dbReference>
<dbReference type="InterPro" id="IPR000037">
    <property type="entry name" value="SsrA-bd_prot"/>
</dbReference>
<dbReference type="InterPro" id="IPR020081">
    <property type="entry name" value="SsrA-bd_prot_CS"/>
</dbReference>
<dbReference type="NCBIfam" id="NF003843">
    <property type="entry name" value="PRK05422.1"/>
    <property type="match status" value="1"/>
</dbReference>
<dbReference type="NCBIfam" id="TIGR00086">
    <property type="entry name" value="smpB"/>
    <property type="match status" value="1"/>
</dbReference>
<dbReference type="PANTHER" id="PTHR30308:SF2">
    <property type="entry name" value="SSRA-BINDING PROTEIN"/>
    <property type="match status" value="1"/>
</dbReference>
<dbReference type="PANTHER" id="PTHR30308">
    <property type="entry name" value="TMRNA-BINDING COMPONENT OF TRANS-TRANSLATION TAGGING COMPLEX"/>
    <property type="match status" value="1"/>
</dbReference>
<dbReference type="Pfam" id="PF01668">
    <property type="entry name" value="SmpB"/>
    <property type="match status" value="1"/>
</dbReference>
<dbReference type="SUPFAM" id="SSF74982">
    <property type="entry name" value="Small protein B (SmpB)"/>
    <property type="match status" value="1"/>
</dbReference>
<dbReference type="PROSITE" id="PS01317">
    <property type="entry name" value="SSRP"/>
    <property type="match status" value="1"/>
</dbReference>
<organism>
    <name type="scientific">Chelativorans sp. (strain BNC1)</name>
    <dbReference type="NCBI Taxonomy" id="266779"/>
    <lineage>
        <taxon>Bacteria</taxon>
        <taxon>Pseudomonadati</taxon>
        <taxon>Pseudomonadota</taxon>
        <taxon>Alphaproteobacteria</taxon>
        <taxon>Hyphomicrobiales</taxon>
        <taxon>Phyllobacteriaceae</taxon>
        <taxon>Chelativorans</taxon>
    </lineage>
</organism>
<reference key="1">
    <citation type="submission" date="2006-06" db="EMBL/GenBank/DDBJ databases">
        <title>Complete sequence of chromosome of Mesorhizobium sp. BNC1.</title>
        <authorList>
            <consortium name="US DOE Joint Genome Institute"/>
            <person name="Copeland A."/>
            <person name="Lucas S."/>
            <person name="Lapidus A."/>
            <person name="Barry K."/>
            <person name="Detter J.C."/>
            <person name="Glavina del Rio T."/>
            <person name="Hammon N."/>
            <person name="Israni S."/>
            <person name="Dalin E."/>
            <person name="Tice H."/>
            <person name="Pitluck S."/>
            <person name="Chertkov O."/>
            <person name="Brettin T."/>
            <person name="Bruce D."/>
            <person name="Han C."/>
            <person name="Tapia R."/>
            <person name="Gilna P."/>
            <person name="Schmutz J."/>
            <person name="Larimer F."/>
            <person name="Land M."/>
            <person name="Hauser L."/>
            <person name="Kyrpides N."/>
            <person name="Mikhailova N."/>
            <person name="Richardson P."/>
        </authorList>
    </citation>
    <scope>NUCLEOTIDE SEQUENCE [LARGE SCALE GENOMIC DNA]</scope>
    <source>
        <strain>BNC1</strain>
    </source>
</reference>
<accession>Q11JT6</accession>